<gene>
    <name type="ordered locus">MT2674</name>
</gene>
<dbReference type="EMBL" id="AE000516">
    <property type="protein sequence ID" value="AAK46989.1"/>
    <property type="molecule type" value="Genomic_DNA"/>
</dbReference>
<dbReference type="PIR" id="F70727">
    <property type="entry name" value="F70727"/>
</dbReference>
<dbReference type="RefSeq" id="WP_003899390.1">
    <property type="nucleotide sequence ID" value="NZ_KK341227.1"/>
</dbReference>
<dbReference type="SMR" id="P9WL68"/>
<dbReference type="KEGG" id="mtc:MT2674"/>
<dbReference type="PATRIC" id="fig|83331.31.peg.2883"/>
<dbReference type="HOGENOM" id="CLU_140231_0_0_11"/>
<dbReference type="Proteomes" id="UP000001020">
    <property type="component" value="Chromosome"/>
</dbReference>
<dbReference type="GO" id="GO:0016020">
    <property type="term" value="C:membrane"/>
    <property type="evidence" value="ECO:0007669"/>
    <property type="project" value="UniProtKB-SubCell"/>
</dbReference>
<dbReference type="InterPro" id="IPR025341">
    <property type="entry name" value="DUF4247"/>
</dbReference>
<dbReference type="Pfam" id="PF14042">
    <property type="entry name" value="DUF4247"/>
    <property type="match status" value="1"/>
</dbReference>
<comment type="subcellular location">
    <subcellularLocation>
        <location evidence="2">Membrane</location>
        <topology evidence="2">Single-pass membrane protein</topology>
    </subcellularLocation>
</comment>
<proteinExistence type="inferred from homology"/>
<organism>
    <name type="scientific">Mycobacterium tuberculosis (strain CDC 1551 / Oshkosh)</name>
    <dbReference type="NCBI Taxonomy" id="83331"/>
    <lineage>
        <taxon>Bacteria</taxon>
        <taxon>Bacillati</taxon>
        <taxon>Actinomycetota</taxon>
        <taxon>Actinomycetes</taxon>
        <taxon>Mycobacteriales</taxon>
        <taxon>Mycobacteriaceae</taxon>
        <taxon>Mycobacterium</taxon>
        <taxon>Mycobacterium tuberculosis complex</taxon>
    </lineage>
</organism>
<keyword id="KW-0472">Membrane</keyword>
<keyword id="KW-1185">Reference proteome</keyword>
<keyword id="KW-0732">Signal</keyword>
<keyword id="KW-0812">Transmembrane</keyword>
<keyword id="KW-1133">Transmembrane helix</keyword>
<accession>P9WL68</accession>
<accession>L0TA52</accession>
<accession>Q50622</accession>
<name>Y2599_MYCTO</name>
<reference key="1">
    <citation type="journal article" date="2002" name="J. Bacteriol.">
        <title>Whole-genome comparison of Mycobacterium tuberculosis clinical and laboratory strains.</title>
        <authorList>
            <person name="Fleischmann R.D."/>
            <person name="Alland D."/>
            <person name="Eisen J.A."/>
            <person name="Carpenter L."/>
            <person name="White O."/>
            <person name="Peterson J.D."/>
            <person name="DeBoy R.T."/>
            <person name="Dodson R.J."/>
            <person name="Gwinn M.L."/>
            <person name="Haft D.H."/>
            <person name="Hickey E.K."/>
            <person name="Kolonay J.F."/>
            <person name="Nelson W.C."/>
            <person name="Umayam L.A."/>
            <person name="Ermolaeva M.D."/>
            <person name="Salzberg S.L."/>
            <person name="Delcher A."/>
            <person name="Utterback T.R."/>
            <person name="Weidman J.F."/>
            <person name="Khouri H.M."/>
            <person name="Gill J."/>
            <person name="Mikula A."/>
            <person name="Bishai W."/>
            <person name="Jacobs W.R. Jr."/>
            <person name="Venter J.C."/>
            <person name="Fraser C.M."/>
        </authorList>
    </citation>
    <scope>NUCLEOTIDE SEQUENCE [LARGE SCALE GENOMIC DNA]</scope>
    <source>
        <strain>CDC 1551 / Oshkosh</strain>
    </source>
</reference>
<sequence length="143" mass="14955">MSRNRLFLVAGSLAVAAAVSLISGITLLNRDVGSYIASHYRQESRDVNGTRYLCTGSPKQVATTLVKYQTPAARASHTDTEYLRYRNNIVTVGPDGTYPCIIRVENLSAGYNHGAYVFLGPGFTPGSPSGGSGGSPGGPGGSK</sequence>
<protein>
    <recommendedName>
        <fullName>Uncharacterized protein MT2674</fullName>
    </recommendedName>
</protein>
<feature type="signal peptide" evidence="1">
    <location>
        <begin position="1"/>
        <end position="16"/>
    </location>
</feature>
<feature type="chain" id="PRO_0000427531" description="Uncharacterized protein MT2674">
    <location>
        <begin position="17"/>
        <end position="143"/>
    </location>
</feature>
<feature type="transmembrane region" description="Helical" evidence="1">
    <location>
        <begin position="114"/>
        <end position="134"/>
    </location>
</feature>
<evidence type="ECO:0000255" key="1"/>
<evidence type="ECO:0000305" key="2"/>